<feature type="chain" id="PRO_1000114079" description="Aminomethyltransferase">
    <location>
        <begin position="1"/>
        <end position="366"/>
    </location>
</feature>
<comment type="function">
    <text evidence="1">The glycine cleavage system catalyzes the degradation of glycine.</text>
</comment>
<comment type="catalytic activity">
    <reaction evidence="1">
        <text>N(6)-[(R)-S(8)-aminomethyldihydrolipoyl]-L-lysyl-[protein] + (6S)-5,6,7,8-tetrahydrofolate = N(6)-[(R)-dihydrolipoyl]-L-lysyl-[protein] + (6R)-5,10-methylene-5,6,7,8-tetrahydrofolate + NH4(+)</text>
        <dbReference type="Rhea" id="RHEA:16945"/>
        <dbReference type="Rhea" id="RHEA-COMP:10475"/>
        <dbReference type="Rhea" id="RHEA-COMP:10492"/>
        <dbReference type="ChEBI" id="CHEBI:15636"/>
        <dbReference type="ChEBI" id="CHEBI:28938"/>
        <dbReference type="ChEBI" id="CHEBI:57453"/>
        <dbReference type="ChEBI" id="CHEBI:83100"/>
        <dbReference type="ChEBI" id="CHEBI:83143"/>
        <dbReference type="EC" id="2.1.2.10"/>
    </reaction>
</comment>
<comment type="subunit">
    <text evidence="1">The glycine cleavage system is composed of four proteins: P, T, L and H.</text>
</comment>
<comment type="similarity">
    <text evidence="1">Belongs to the GcvT family.</text>
</comment>
<name>GCST_BORPD</name>
<sequence length="366" mass="39484">MSASLKRTPLADAHVAAGARMVDFGGWDMPLAYGSQLEEHHAVRRDAGMFDVSHMLNVDVTGPDATAFLRRLVANDVARLTVPGKALYSCMLNPQGGIIDDLIVYFFAADQWRVVVNAATADKDVAWMQRVAAAGSYDVAIAPRRDLAMVAVQGPNARARVWAARPAWQAATEPLTPFVAAQVADDTLVARTGYTGEDGFEIVLPADQVVALWNDLLAQGVRPCGLGARDTLRLEAGMNLYGQDMDELTQPDQAGLTWTVSLKDPERRFVGRDALEQFAAPRGFVGLKLQERGVMRAHMAVYTPLGEGEITSGTMSPTLGVSVAFARVPQGVQPGQTVEVDIRGKRVPALVCKLPFVRHGKAVEHS</sequence>
<keyword id="KW-0032">Aminotransferase</keyword>
<keyword id="KW-0808">Transferase</keyword>
<accession>A9I7L6</accession>
<protein>
    <recommendedName>
        <fullName evidence="1">Aminomethyltransferase</fullName>
        <ecNumber evidence="1">2.1.2.10</ecNumber>
    </recommendedName>
    <alternativeName>
        <fullName evidence="1">Glycine cleavage system T protein</fullName>
    </alternativeName>
</protein>
<evidence type="ECO:0000255" key="1">
    <source>
        <dbReference type="HAMAP-Rule" id="MF_00259"/>
    </source>
</evidence>
<reference key="1">
    <citation type="journal article" date="2008" name="BMC Genomics">
        <title>The missing link: Bordetella petrii is endowed with both the metabolic versatility of environmental bacteria and virulence traits of pathogenic Bordetellae.</title>
        <authorList>
            <person name="Gross R."/>
            <person name="Guzman C.A."/>
            <person name="Sebaihia M."/>
            <person name="Martin dos Santos V.A.P."/>
            <person name="Pieper D.H."/>
            <person name="Koebnik R."/>
            <person name="Lechner M."/>
            <person name="Bartels D."/>
            <person name="Buhrmester J."/>
            <person name="Choudhuri J.V."/>
            <person name="Ebensen T."/>
            <person name="Gaigalat L."/>
            <person name="Herrmann S."/>
            <person name="Khachane A.N."/>
            <person name="Larisch C."/>
            <person name="Link S."/>
            <person name="Linke B."/>
            <person name="Meyer F."/>
            <person name="Mormann S."/>
            <person name="Nakunst D."/>
            <person name="Rueckert C."/>
            <person name="Schneiker-Bekel S."/>
            <person name="Schulze K."/>
            <person name="Voerholter F.-J."/>
            <person name="Yevsa T."/>
            <person name="Engle J.T."/>
            <person name="Goldman W.E."/>
            <person name="Puehler A."/>
            <person name="Goebel U.B."/>
            <person name="Goesmann A."/>
            <person name="Bloecker H."/>
            <person name="Kaiser O."/>
            <person name="Martinez-Arias R."/>
        </authorList>
    </citation>
    <scope>NUCLEOTIDE SEQUENCE [LARGE SCALE GENOMIC DNA]</scope>
    <source>
        <strain>ATCC BAA-461 / DSM 12804 / CCUG 43448</strain>
    </source>
</reference>
<dbReference type="EC" id="2.1.2.10" evidence="1"/>
<dbReference type="EMBL" id="AM902716">
    <property type="protein sequence ID" value="CAP44424.1"/>
    <property type="molecule type" value="Genomic_DNA"/>
</dbReference>
<dbReference type="SMR" id="A9I7L6"/>
<dbReference type="STRING" id="94624.Bpet4076"/>
<dbReference type="KEGG" id="bpt:Bpet4076"/>
<dbReference type="eggNOG" id="COG0404">
    <property type="taxonomic scope" value="Bacteria"/>
</dbReference>
<dbReference type="Proteomes" id="UP000001225">
    <property type="component" value="Chromosome"/>
</dbReference>
<dbReference type="GO" id="GO:0005829">
    <property type="term" value="C:cytosol"/>
    <property type="evidence" value="ECO:0007669"/>
    <property type="project" value="TreeGrafter"/>
</dbReference>
<dbReference type="GO" id="GO:0005960">
    <property type="term" value="C:glycine cleavage complex"/>
    <property type="evidence" value="ECO:0007669"/>
    <property type="project" value="InterPro"/>
</dbReference>
<dbReference type="GO" id="GO:0004047">
    <property type="term" value="F:aminomethyltransferase activity"/>
    <property type="evidence" value="ECO:0007669"/>
    <property type="project" value="UniProtKB-UniRule"/>
</dbReference>
<dbReference type="GO" id="GO:0008483">
    <property type="term" value="F:transaminase activity"/>
    <property type="evidence" value="ECO:0007669"/>
    <property type="project" value="UniProtKB-KW"/>
</dbReference>
<dbReference type="GO" id="GO:0019464">
    <property type="term" value="P:glycine decarboxylation via glycine cleavage system"/>
    <property type="evidence" value="ECO:0007669"/>
    <property type="project" value="UniProtKB-UniRule"/>
</dbReference>
<dbReference type="FunFam" id="3.30.70.1400:FF:000001">
    <property type="entry name" value="Aminomethyltransferase"/>
    <property type="match status" value="1"/>
</dbReference>
<dbReference type="Gene3D" id="2.40.30.110">
    <property type="entry name" value="Aminomethyltransferase beta-barrel domains"/>
    <property type="match status" value="1"/>
</dbReference>
<dbReference type="Gene3D" id="3.30.70.1400">
    <property type="entry name" value="Aminomethyltransferase beta-barrel domains"/>
    <property type="match status" value="1"/>
</dbReference>
<dbReference type="Gene3D" id="4.10.1250.10">
    <property type="entry name" value="Aminomethyltransferase fragment"/>
    <property type="match status" value="1"/>
</dbReference>
<dbReference type="Gene3D" id="3.30.1360.120">
    <property type="entry name" value="Probable tRNA modification gtpase trme, domain 1"/>
    <property type="match status" value="1"/>
</dbReference>
<dbReference type="HAMAP" id="MF_00259">
    <property type="entry name" value="GcvT"/>
    <property type="match status" value="1"/>
</dbReference>
<dbReference type="InterPro" id="IPR006223">
    <property type="entry name" value="GCS_T"/>
</dbReference>
<dbReference type="InterPro" id="IPR022903">
    <property type="entry name" value="GCS_T_bac"/>
</dbReference>
<dbReference type="InterPro" id="IPR013977">
    <property type="entry name" value="GCST_C"/>
</dbReference>
<dbReference type="InterPro" id="IPR006222">
    <property type="entry name" value="GCV_T_N"/>
</dbReference>
<dbReference type="InterPro" id="IPR028896">
    <property type="entry name" value="GcvT/YgfZ/DmdA"/>
</dbReference>
<dbReference type="InterPro" id="IPR029043">
    <property type="entry name" value="GcvT/YgfZ_C"/>
</dbReference>
<dbReference type="InterPro" id="IPR027266">
    <property type="entry name" value="TrmE/GcvT_dom1"/>
</dbReference>
<dbReference type="NCBIfam" id="TIGR00528">
    <property type="entry name" value="gcvT"/>
    <property type="match status" value="1"/>
</dbReference>
<dbReference type="NCBIfam" id="NF001567">
    <property type="entry name" value="PRK00389.1"/>
    <property type="match status" value="1"/>
</dbReference>
<dbReference type="PANTHER" id="PTHR43757">
    <property type="entry name" value="AMINOMETHYLTRANSFERASE"/>
    <property type="match status" value="1"/>
</dbReference>
<dbReference type="PANTHER" id="PTHR43757:SF2">
    <property type="entry name" value="AMINOMETHYLTRANSFERASE, MITOCHONDRIAL"/>
    <property type="match status" value="1"/>
</dbReference>
<dbReference type="Pfam" id="PF01571">
    <property type="entry name" value="GCV_T"/>
    <property type="match status" value="1"/>
</dbReference>
<dbReference type="Pfam" id="PF08669">
    <property type="entry name" value="GCV_T_C"/>
    <property type="match status" value="1"/>
</dbReference>
<dbReference type="PIRSF" id="PIRSF006487">
    <property type="entry name" value="GcvT"/>
    <property type="match status" value="1"/>
</dbReference>
<dbReference type="SUPFAM" id="SSF101790">
    <property type="entry name" value="Aminomethyltransferase beta-barrel domain"/>
    <property type="match status" value="1"/>
</dbReference>
<dbReference type="SUPFAM" id="SSF103025">
    <property type="entry name" value="Folate-binding domain"/>
    <property type="match status" value="1"/>
</dbReference>
<organism>
    <name type="scientific">Bordetella petrii (strain ATCC BAA-461 / DSM 12804 / CCUG 43448)</name>
    <dbReference type="NCBI Taxonomy" id="340100"/>
    <lineage>
        <taxon>Bacteria</taxon>
        <taxon>Pseudomonadati</taxon>
        <taxon>Pseudomonadota</taxon>
        <taxon>Betaproteobacteria</taxon>
        <taxon>Burkholderiales</taxon>
        <taxon>Alcaligenaceae</taxon>
        <taxon>Bordetella</taxon>
    </lineage>
</organism>
<gene>
    <name evidence="1" type="primary">gcvT</name>
    <name type="ordered locus">Bpet4076</name>
</gene>
<proteinExistence type="inferred from homology"/>